<reference key="1">
    <citation type="submission" date="2007-07" db="EMBL/GenBank/DDBJ databases">
        <title>Complete genome sequence of Campylobacter hominis ATCC BAA-381, a commensal isolated from the human gastrointestinal tract.</title>
        <authorList>
            <person name="Fouts D.E."/>
            <person name="Mongodin E.F."/>
            <person name="Puiu D."/>
            <person name="Sebastian Y."/>
            <person name="Miller W.G."/>
            <person name="Mandrell R.E."/>
            <person name="Nelson K.E."/>
        </authorList>
    </citation>
    <scope>NUCLEOTIDE SEQUENCE [LARGE SCALE GENOMIC DNA]</scope>
    <source>
        <strain>ATCC BAA-381 / DSM 21671 / CCUG 45161 / LMG 19568 / NCTC 13146 / CH001A</strain>
    </source>
</reference>
<protein>
    <recommendedName>
        <fullName evidence="1">Large ribosomal subunit protein bL31</fullName>
    </recommendedName>
    <alternativeName>
        <fullName evidence="2">50S ribosomal protein L31</fullName>
    </alternativeName>
</protein>
<comment type="function">
    <text evidence="1">Binds the 23S rRNA.</text>
</comment>
<comment type="cofactor">
    <cofactor evidence="1">
        <name>Zn(2+)</name>
        <dbReference type="ChEBI" id="CHEBI:29105"/>
    </cofactor>
    <text evidence="1">Binds 1 zinc ion per subunit.</text>
</comment>
<comment type="subunit">
    <text evidence="1">Part of the 50S ribosomal subunit.</text>
</comment>
<comment type="similarity">
    <text evidence="1">Belongs to the bacterial ribosomal protein bL31 family. Type A subfamily.</text>
</comment>
<gene>
    <name evidence="1" type="primary">rpmE</name>
    <name type="ordered locus">CHAB381_0223</name>
</gene>
<sequence length="66" mass="7471">MKKDIHPNYVECTVACACGNTFKTRSNKPEIKVDVCSKCHPFFTGSEKIVDSAGRVEKFNKKYGRK</sequence>
<dbReference type="EMBL" id="CP000776">
    <property type="protein sequence ID" value="ABS51123.1"/>
    <property type="molecule type" value="Genomic_DNA"/>
</dbReference>
<dbReference type="RefSeq" id="WP_012108111.1">
    <property type="nucleotide sequence ID" value="NC_009714.1"/>
</dbReference>
<dbReference type="SMR" id="A7HZY9"/>
<dbReference type="STRING" id="360107.CHAB381_0223"/>
<dbReference type="KEGG" id="cha:CHAB381_0223"/>
<dbReference type="eggNOG" id="COG0254">
    <property type="taxonomic scope" value="Bacteria"/>
</dbReference>
<dbReference type="HOGENOM" id="CLU_114306_4_3_7"/>
<dbReference type="OrthoDB" id="9803251at2"/>
<dbReference type="Proteomes" id="UP000002407">
    <property type="component" value="Chromosome"/>
</dbReference>
<dbReference type="GO" id="GO:1990904">
    <property type="term" value="C:ribonucleoprotein complex"/>
    <property type="evidence" value="ECO:0007669"/>
    <property type="project" value="UniProtKB-KW"/>
</dbReference>
<dbReference type="GO" id="GO:0005840">
    <property type="term" value="C:ribosome"/>
    <property type="evidence" value="ECO:0007669"/>
    <property type="project" value="UniProtKB-KW"/>
</dbReference>
<dbReference type="GO" id="GO:0046872">
    <property type="term" value="F:metal ion binding"/>
    <property type="evidence" value="ECO:0007669"/>
    <property type="project" value="UniProtKB-KW"/>
</dbReference>
<dbReference type="GO" id="GO:0019843">
    <property type="term" value="F:rRNA binding"/>
    <property type="evidence" value="ECO:0007669"/>
    <property type="project" value="UniProtKB-KW"/>
</dbReference>
<dbReference type="GO" id="GO:0003735">
    <property type="term" value="F:structural constituent of ribosome"/>
    <property type="evidence" value="ECO:0007669"/>
    <property type="project" value="InterPro"/>
</dbReference>
<dbReference type="GO" id="GO:0006412">
    <property type="term" value="P:translation"/>
    <property type="evidence" value="ECO:0007669"/>
    <property type="project" value="UniProtKB-UniRule"/>
</dbReference>
<dbReference type="Gene3D" id="4.10.830.30">
    <property type="entry name" value="Ribosomal protein L31"/>
    <property type="match status" value="1"/>
</dbReference>
<dbReference type="HAMAP" id="MF_00501">
    <property type="entry name" value="Ribosomal_bL31_1"/>
    <property type="match status" value="1"/>
</dbReference>
<dbReference type="InterPro" id="IPR034704">
    <property type="entry name" value="Ribosomal_bL28/bL31-like_sf"/>
</dbReference>
<dbReference type="InterPro" id="IPR002150">
    <property type="entry name" value="Ribosomal_bL31"/>
</dbReference>
<dbReference type="InterPro" id="IPR027491">
    <property type="entry name" value="Ribosomal_bL31_A"/>
</dbReference>
<dbReference type="InterPro" id="IPR042105">
    <property type="entry name" value="Ribosomal_bL31_sf"/>
</dbReference>
<dbReference type="NCBIfam" id="TIGR00105">
    <property type="entry name" value="L31"/>
    <property type="match status" value="1"/>
</dbReference>
<dbReference type="NCBIfam" id="NF000612">
    <property type="entry name" value="PRK00019.1"/>
    <property type="match status" value="1"/>
</dbReference>
<dbReference type="NCBIfam" id="NF001809">
    <property type="entry name" value="PRK00528.1"/>
    <property type="match status" value="1"/>
</dbReference>
<dbReference type="PANTHER" id="PTHR33280">
    <property type="entry name" value="50S RIBOSOMAL PROTEIN L31, CHLOROPLASTIC"/>
    <property type="match status" value="1"/>
</dbReference>
<dbReference type="PANTHER" id="PTHR33280:SF1">
    <property type="entry name" value="LARGE RIBOSOMAL SUBUNIT PROTEIN BL31C"/>
    <property type="match status" value="1"/>
</dbReference>
<dbReference type="Pfam" id="PF01197">
    <property type="entry name" value="Ribosomal_L31"/>
    <property type="match status" value="1"/>
</dbReference>
<dbReference type="PRINTS" id="PR01249">
    <property type="entry name" value="RIBOSOMALL31"/>
</dbReference>
<dbReference type="SUPFAM" id="SSF143800">
    <property type="entry name" value="L28p-like"/>
    <property type="match status" value="1"/>
</dbReference>
<dbReference type="PROSITE" id="PS01143">
    <property type="entry name" value="RIBOSOMAL_L31"/>
    <property type="match status" value="1"/>
</dbReference>
<organism>
    <name type="scientific">Campylobacter hominis (strain ATCC BAA-381 / DSM 21671 / CCUG 45161 / LMG 19568 / NCTC 13146 / CH001A)</name>
    <dbReference type="NCBI Taxonomy" id="360107"/>
    <lineage>
        <taxon>Bacteria</taxon>
        <taxon>Pseudomonadati</taxon>
        <taxon>Campylobacterota</taxon>
        <taxon>Epsilonproteobacteria</taxon>
        <taxon>Campylobacterales</taxon>
        <taxon>Campylobacteraceae</taxon>
        <taxon>Campylobacter</taxon>
    </lineage>
</organism>
<proteinExistence type="inferred from homology"/>
<feature type="chain" id="PRO_1000126580" description="Large ribosomal subunit protein bL31">
    <location>
        <begin position="1"/>
        <end position="66"/>
    </location>
</feature>
<feature type="binding site" evidence="1">
    <location>
        <position position="16"/>
    </location>
    <ligand>
        <name>Zn(2+)</name>
        <dbReference type="ChEBI" id="CHEBI:29105"/>
    </ligand>
</feature>
<feature type="binding site" evidence="1">
    <location>
        <position position="18"/>
    </location>
    <ligand>
        <name>Zn(2+)</name>
        <dbReference type="ChEBI" id="CHEBI:29105"/>
    </ligand>
</feature>
<feature type="binding site" evidence="1">
    <location>
        <position position="36"/>
    </location>
    <ligand>
        <name>Zn(2+)</name>
        <dbReference type="ChEBI" id="CHEBI:29105"/>
    </ligand>
</feature>
<feature type="binding site" evidence="1">
    <location>
        <position position="39"/>
    </location>
    <ligand>
        <name>Zn(2+)</name>
        <dbReference type="ChEBI" id="CHEBI:29105"/>
    </ligand>
</feature>
<accession>A7HZY9</accession>
<keyword id="KW-0479">Metal-binding</keyword>
<keyword id="KW-1185">Reference proteome</keyword>
<keyword id="KW-0687">Ribonucleoprotein</keyword>
<keyword id="KW-0689">Ribosomal protein</keyword>
<keyword id="KW-0694">RNA-binding</keyword>
<keyword id="KW-0699">rRNA-binding</keyword>
<keyword id="KW-0862">Zinc</keyword>
<evidence type="ECO:0000255" key="1">
    <source>
        <dbReference type="HAMAP-Rule" id="MF_00501"/>
    </source>
</evidence>
<evidence type="ECO:0000305" key="2"/>
<name>RL31_CAMHC</name>